<accession>Q47J92</accession>
<sequence>MMEKIRKGDEIVVITGKDKGKRGTVLRRVDDEHVLVEGVNRAKKHVKPNPVKGVAGGIVDKDMPIHISNVALFNPATKKADRVGFKALDDGRKVRVFKSNGELVNA</sequence>
<evidence type="ECO:0000255" key="1">
    <source>
        <dbReference type="HAMAP-Rule" id="MF_01326"/>
    </source>
</evidence>
<evidence type="ECO:0000305" key="2"/>
<gene>
    <name evidence="1" type="primary">rplX</name>
    <name type="ordered locus">Daro_0330</name>
</gene>
<proteinExistence type="inferred from homology"/>
<feature type="chain" id="PRO_0000241589" description="Large ribosomal subunit protein uL24">
    <location>
        <begin position="1"/>
        <end position="106"/>
    </location>
</feature>
<organism>
    <name type="scientific">Dechloromonas aromatica (strain RCB)</name>
    <dbReference type="NCBI Taxonomy" id="159087"/>
    <lineage>
        <taxon>Bacteria</taxon>
        <taxon>Pseudomonadati</taxon>
        <taxon>Pseudomonadota</taxon>
        <taxon>Betaproteobacteria</taxon>
        <taxon>Rhodocyclales</taxon>
        <taxon>Azonexaceae</taxon>
        <taxon>Dechloromonas</taxon>
    </lineage>
</organism>
<keyword id="KW-0687">Ribonucleoprotein</keyword>
<keyword id="KW-0689">Ribosomal protein</keyword>
<keyword id="KW-0694">RNA-binding</keyword>
<keyword id="KW-0699">rRNA-binding</keyword>
<name>RL24_DECAR</name>
<protein>
    <recommendedName>
        <fullName evidence="1">Large ribosomal subunit protein uL24</fullName>
    </recommendedName>
    <alternativeName>
        <fullName evidence="2">50S ribosomal protein L24</fullName>
    </alternativeName>
</protein>
<comment type="function">
    <text evidence="1">One of two assembly initiator proteins, it binds directly to the 5'-end of the 23S rRNA, where it nucleates assembly of the 50S subunit.</text>
</comment>
<comment type="function">
    <text evidence="1">One of the proteins that surrounds the polypeptide exit tunnel on the outside of the subunit.</text>
</comment>
<comment type="subunit">
    <text evidence="1">Part of the 50S ribosomal subunit.</text>
</comment>
<comment type="similarity">
    <text evidence="1">Belongs to the universal ribosomal protein uL24 family.</text>
</comment>
<reference key="1">
    <citation type="journal article" date="2009" name="BMC Genomics">
        <title>Metabolic analysis of the soil microbe Dechloromonas aromatica str. RCB: indications of a surprisingly complex life-style and cryptic anaerobic pathways for aromatic degradation.</title>
        <authorList>
            <person name="Salinero K.K."/>
            <person name="Keller K."/>
            <person name="Feil W.S."/>
            <person name="Feil H."/>
            <person name="Trong S."/>
            <person name="Di Bartolo G."/>
            <person name="Lapidus A."/>
        </authorList>
    </citation>
    <scope>NUCLEOTIDE SEQUENCE [LARGE SCALE GENOMIC DNA]</scope>
    <source>
        <strain>RCB</strain>
    </source>
</reference>
<dbReference type="EMBL" id="CP000089">
    <property type="protein sequence ID" value="AAZ45089.1"/>
    <property type="molecule type" value="Genomic_DNA"/>
</dbReference>
<dbReference type="SMR" id="Q47J92"/>
<dbReference type="STRING" id="159087.Daro_0330"/>
<dbReference type="KEGG" id="dar:Daro_0330"/>
<dbReference type="eggNOG" id="COG0198">
    <property type="taxonomic scope" value="Bacteria"/>
</dbReference>
<dbReference type="HOGENOM" id="CLU_093315_2_2_4"/>
<dbReference type="GO" id="GO:1990904">
    <property type="term" value="C:ribonucleoprotein complex"/>
    <property type="evidence" value="ECO:0007669"/>
    <property type="project" value="UniProtKB-KW"/>
</dbReference>
<dbReference type="GO" id="GO:0005840">
    <property type="term" value="C:ribosome"/>
    <property type="evidence" value="ECO:0007669"/>
    <property type="project" value="UniProtKB-KW"/>
</dbReference>
<dbReference type="GO" id="GO:0019843">
    <property type="term" value="F:rRNA binding"/>
    <property type="evidence" value="ECO:0007669"/>
    <property type="project" value="UniProtKB-UniRule"/>
</dbReference>
<dbReference type="GO" id="GO:0003735">
    <property type="term" value="F:structural constituent of ribosome"/>
    <property type="evidence" value="ECO:0007669"/>
    <property type="project" value="InterPro"/>
</dbReference>
<dbReference type="GO" id="GO:0006412">
    <property type="term" value="P:translation"/>
    <property type="evidence" value="ECO:0007669"/>
    <property type="project" value="UniProtKB-UniRule"/>
</dbReference>
<dbReference type="CDD" id="cd06089">
    <property type="entry name" value="KOW_RPL26"/>
    <property type="match status" value="1"/>
</dbReference>
<dbReference type="FunFam" id="2.30.30.30:FF:000004">
    <property type="entry name" value="50S ribosomal protein L24"/>
    <property type="match status" value="1"/>
</dbReference>
<dbReference type="Gene3D" id="2.30.30.30">
    <property type="match status" value="1"/>
</dbReference>
<dbReference type="HAMAP" id="MF_01326_B">
    <property type="entry name" value="Ribosomal_uL24_B"/>
    <property type="match status" value="1"/>
</dbReference>
<dbReference type="InterPro" id="IPR005824">
    <property type="entry name" value="KOW"/>
</dbReference>
<dbReference type="InterPro" id="IPR014722">
    <property type="entry name" value="Rib_uL2_dom2"/>
</dbReference>
<dbReference type="InterPro" id="IPR003256">
    <property type="entry name" value="Ribosomal_uL24"/>
</dbReference>
<dbReference type="InterPro" id="IPR005825">
    <property type="entry name" value="Ribosomal_uL24_CS"/>
</dbReference>
<dbReference type="InterPro" id="IPR041988">
    <property type="entry name" value="Ribosomal_uL24_KOW"/>
</dbReference>
<dbReference type="InterPro" id="IPR008991">
    <property type="entry name" value="Translation_prot_SH3-like_sf"/>
</dbReference>
<dbReference type="NCBIfam" id="TIGR01079">
    <property type="entry name" value="rplX_bact"/>
    <property type="match status" value="1"/>
</dbReference>
<dbReference type="PANTHER" id="PTHR12903">
    <property type="entry name" value="MITOCHONDRIAL RIBOSOMAL PROTEIN L24"/>
    <property type="match status" value="1"/>
</dbReference>
<dbReference type="Pfam" id="PF00467">
    <property type="entry name" value="KOW"/>
    <property type="match status" value="1"/>
</dbReference>
<dbReference type="Pfam" id="PF17136">
    <property type="entry name" value="ribosomal_L24"/>
    <property type="match status" value="1"/>
</dbReference>
<dbReference type="SMART" id="SM00739">
    <property type="entry name" value="KOW"/>
    <property type="match status" value="1"/>
</dbReference>
<dbReference type="SUPFAM" id="SSF50104">
    <property type="entry name" value="Translation proteins SH3-like domain"/>
    <property type="match status" value="1"/>
</dbReference>
<dbReference type="PROSITE" id="PS01108">
    <property type="entry name" value="RIBOSOMAL_L24"/>
    <property type="match status" value="1"/>
</dbReference>